<dbReference type="PIR" id="A37961">
    <property type="entry name" value="A37961"/>
</dbReference>
<dbReference type="SMR" id="P22031"/>
<dbReference type="GO" id="GO:0005737">
    <property type="term" value="C:cytoplasm"/>
    <property type="evidence" value="ECO:0007669"/>
    <property type="project" value="UniProtKB-SubCell"/>
</dbReference>
<dbReference type="GO" id="GO:0030246">
    <property type="term" value="F:carbohydrate binding"/>
    <property type="evidence" value="ECO:0007669"/>
    <property type="project" value="UniProtKB-KW"/>
</dbReference>
<dbReference type="CDD" id="cd22827">
    <property type="entry name" value="Gal_Rha_Lectin_SUL-I-like"/>
    <property type="match status" value="1"/>
</dbReference>
<dbReference type="FunFam" id="2.60.120.740:FF:000001">
    <property type="entry name" value="Adhesion G protein-coupled receptor L2"/>
    <property type="match status" value="1"/>
</dbReference>
<dbReference type="Gene3D" id="2.60.120.740">
    <property type="match status" value="1"/>
</dbReference>
<dbReference type="InterPro" id="IPR000922">
    <property type="entry name" value="Lectin_gal-bd_dom"/>
</dbReference>
<dbReference type="InterPro" id="IPR043159">
    <property type="entry name" value="Lectin_gal-bd_sf"/>
</dbReference>
<dbReference type="PANTHER" id="PTHR46780">
    <property type="entry name" value="PROTEIN EVA-1"/>
    <property type="match status" value="1"/>
</dbReference>
<dbReference type="Pfam" id="PF02140">
    <property type="entry name" value="SUEL_Lectin"/>
    <property type="match status" value="1"/>
</dbReference>
<dbReference type="PROSITE" id="PS50228">
    <property type="entry name" value="SUEL_LECTIN"/>
    <property type="match status" value="1"/>
</dbReference>
<sequence>ELVSEFCLKKERVCEDSSLTISCPEGEGIVIYDAIYGRKRGEVCPGLFGAFTKNRKCRSSNSQQVVENSCEGKSSCTVLASNSVFGDPCPGTAKYLAVTYICSFL</sequence>
<protein>
    <recommendedName>
        <fullName>D-galactoside-specific lectin</fullName>
    </recommendedName>
    <alternativeName>
        <fullName>Sea urchin egg lectin</fullName>
        <shortName>SUEL</shortName>
    </alternativeName>
</protein>
<name>LEG_HELCR</name>
<organism>
    <name type="scientific">Heliocidaris crassispina</name>
    <name type="common">Sea urchin</name>
    <name type="synonym">Anthocidaris crassispina</name>
    <dbReference type="NCBI Taxonomy" id="1043166"/>
    <lineage>
        <taxon>Eukaryota</taxon>
        <taxon>Metazoa</taxon>
        <taxon>Echinodermata</taxon>
        <taxon>Eleutherozoa</taxon>
        <taxon>Echinozoa</taxon>
        <taxon>Echinoidea</taxon>
        <taxon>Euechinoidea</taxon>
        <taxon>Echinacea</taxon>
        <taxon>Camarodonta</taxon>
        <taxon>Echinidea</taxon>
        <taxon>Echinometridae</taxon>
        <taxon>Heliocidaris</taxon>
    </lineage>
</organism>
<comment type="function">
    <text>This protein binds D-galactoside. May have an important role in the activation of eggs (triggered by fertilization), or in their subsequent differentiation. The dimeric form is essential for hemagglutination activity.</text>
</comment>
<comment type="subunit">
    <text>Homodimer; disulfide-linked.</text>
</comment>
<comment type="subcellular location">
    <subcellularLocation>
        <location>Cytoplasm</location>
    </subcellularLocation>
    <text>Cytoplasmic in unfertilized eggs, and shifted to the peripheral regions after fertilization.</text>
</comment>
<evidence type="ECO:0000255" key="1">
    <source>
        <dbReference type="PROSITE-ProRule" id="PRU00260"/>
    </source>
</evidence>
<proteinExistence type="evidence at protein level"/>
<accession>P22031</accession>
<reference key="1">
    <citation type="journal article" date="1991" name="Biochemistry">
        <title>Amino acid sequence and molecular characterization of a D-galactoside-specific lectin purified from sea urchin (Anthocidaris crassispina) eggs.</title>
        <authorList>
            <person name="Ozeki Y."/>
            <person name="Matsui T."/>
            <person name="Suzuki M."/>
            <person name="Titani K."/>
        </authorList>
    </citation>
    <scope>PROTEIN SEQUENCE</scope>
    <source>
        <tissue>Egg</tissue>
    </source>
</reference>
<keyword id="KW-0963">Cytoplasm</keyword>
<keyword id="KW-0903">Direct protein sequencing</keyword>
<keyword id="KW-1015">Disulfide bond</keyword>
<keyword id="KW-0430">Lectin</keyword>
<feature type="chain" id="PRO_0000207119" description="D-galactoside-specific lectin">
    <location>
        <begin position="1"/>
        <end position="105"/>
    </location>
</feature>
<feature type="domain" description="SUEL-type lectin" evidence="1">
    <location>
        <begin position="13"/>
        <end position="103"/>
    </location>
</feature>